<gene>
    <name type="primary">RPL7A</name>
    <name type="ordered locus">At1g80750</name>
    <name type="ORF">F23A5.10</name>
</gene>
<accession>Q9SAI5</accession>
<evidence type="ECO:0000303" key="1">
    <source>
    </source>
</evidence>
<evidence type="ECO:0000305" key="2"/>
<name>RL71_ARATH</name>
<proteinExistence type="evidence at transcript level"/>
<reference key="1">
    <citation type="journal article" date="2000" name="Nature">
        <title>Sequence and analysis of chromosome 1 of the plant Arabidopsis thaliana.</title>
        <authorList>
            <person name="Theologis A."/>
            <person name="Ecker J.R."/>
            <person name="Palm C.J."/>
            <person name="Federspiel N.A."/>
            <person name="Kaul S."/>
            <person name="White O."/>
            <person name="Alonso J."/>
            <person name="Altafi H."/>
            <person name="Araujo R."/>
            <person name="Bowman C.L."/>
            <person name="Brooks S.Y."/>
            <person name="Buehler E."/>
            <person name="Chan A."/>
            <person name="Chao Q."/>
            <person name="Chen H."/>
            <person name="Cheuk R.F."/>
            <person name="Chin C.W."/>
            <person name="Chung M.K."/>
            <person name="Conn L."/>
            <person name="Conway A.B."/>
            <person name="Conway A.R."/>
            <person name="Creasy T.H."/>
            <person name="Dewar K."/>
            <person name="Dunn P."/>
            <person name="Etgu P."/>
            <person name="Feldblyum T.V."/>
            <person name="Feng J.-D."/>
            <person name="Fong B."/>
            <person name="Fujii C.Y."/>
            <person name="Gill J.E."/>
            <person name="Goldsmith A.D."/>
            <person name="Haas B."/>
            <person name="Hansen N.F."/>
            <person name="Hughes B."/>
            <person name="Huizar L."/>
            <person name="Hunter J.L."/>
            <person name="Jenkins J."/>
            <person name="Johnson-Hopson C."/>
            <person name="Khan S."/>
            <person name="Khaykin E."/>
            <person name="Kim C.J."/>
            <person name="Koo H.L."/>
            <person name="Kremenetskaia I."/>
            <person name="Kurtz D.B."/>
            <person name="Kwan A."/>
            <person name="Lam B."/>
            <person name="Langin-Hooper S."/>
            <person name="Lee A."/>
            <person name="Lee J.M."/>
            <person name="Lenz C.A."/>
            <person name="Li J.H."/>
            <person name="Li Y.-P."/>
            <person name="Lin X."/>
            <person name="Liu S.X."/>
            <person name="Liu Z.A."/>
            <person name="Luros J.S."/>
            <person name="Maiti R."/>
            <person name="Marziali A."/>
            <person name="Militscher J."/>
            <person name="Miranda M."/>
            <person name="Nguyen M."/>
            <person name="Nierman W.C."/>
            <person name="Osborne B.I."/>
            <person name="Pai G."/>
            <person name="Peterson J."/>
            <person name="Pham P.K."/>
            <person name="Rizzo M."/>
            <person name="Rooney T."/>
            <person name="Rowley D."/>
            <person name="Sakano H."/>
            <person name="Salzberg S.L."/>
            <person name="Schwartz J.R."/>
            <person name="Shinn P."/>
            <person name="Southwick A.M."/>
            <person name="Sun H."/>
            <person name="Tallon L.J."/>
            <person name="Tambunga G."/>
            <person name="Toriumi M.J."/>
            <person name="Town C.D."/>
            <person name="Utterback T."/>
            <person name="Van Aken S."/>
            <person name="Vaysberg M."/>
            <person name="Vysotskaia V.S."/>
            <person name="Walker M."/>
            <person name="Wu D."/>
            <person name="Yu G."/>
            <person name="Fraser C.M."/>
            <person name="Venter J.C."/>
            <person name="Davis R.W."/>
        </authorList>
    </citation>
    <scope>NUCLEOTIDE SEQUENCE [LARGE SCALE GENOMIC DNA]</scope>
    <source>
        <strain>cv. Columbia</strain>
    </source>
</reference>
<reference key="2">
    <citation type="journal article" date="2017" name="Plant J.">
        <title>Araport11: a complete reannotation of the Arabidopsis thaliana reference genome.</title>
        <authorList>
            <person name="Cheng C.Y."/>
            <person name="Krishnakumar V."/>
            <person name="Chan A.P."/>
            <person name="Thibaud-Nissen F."/>
            <person name="Schobel S."/>
            <person name="Town C.D."/>
        </authorList>
    </citation>
    <scope>GENOME REANNOTATION</scope>
    <source>
        <strain>cv. Columbia</strain>
    </source>
</reference>
<reference key="3">
    <citation type="journal article" date="2003" name="Science">
        <title>Empirical analysis of transcriptional activity in the Arabidopsis genome.</title>
        <authorList>
            <person name="Yamada K."/>
            <person name="Lim J."/>
            <person name="Dale J.M."/>
            <person name="Chen H."/>
            <person name="Shinn P."/>
            <person name="Palm C.J."/>
            <person name="Southwick A.M."/>
            <person name="Wu H.C."/>
            <person name="Kim C.J."/>
            <person name="Nguyen M."/>
            <person name="Pham P.K."/>
            <person name="Cheuk R.F."/>
            <person name="Karlin-Newmann G."/>
            <person name="Liu S.X."/>
            <person name="Lam B."/>
            <person name="Sakano H."/>
            <person name="Wu T."/>
            <person name="Yu G."/>
            <person name="Miranda M."/>
            <person name="Quach H.L."/>
            <person name="Tripp M."/>
            <person name="Chang C.H."/>
            <person name="Lee J.M."/>
            <person name="Toriumi M.J."/>
            <person name="Chan M.M."/>
            <person name="Tang C.C."/>
            <person name="Onodera C.S."/>
            <person name="Deng J.M."/>
            <person name="Akiyama K."/>
            <person name="Ansari Y."/>
            <person name="Arakawa T."/>
            <person name="Banh J."/>
            <person name="Banno F."/>
            <person name="Bowser L."/>
            <person name="Brooks S.Y."/>
            <person name="Carninci P."/>
            <person name="Chao Q."/>
            <person name="Choy N."/>
            <person name="Enju A."/>
            <person name="Goldsmith A.D."/>
            <person name="Gurjal M."/>
            <person name="Hansen N.F."/>
            <person name="Hayashizaki Y."/>
            <person name="Johnson-Hopson C."/>
            <person name="Hsuan V.W."/>
            <person name="Iida K."/>
            <person name="Karnes M."/>
            <person name="Khan S."/>
            <person name="Koesema E."/>
            <person name="Ishida J."/>
            <person name="Jiang P.X."/>
            <person name="Jones T."/>
            <person name="Kawai J."/>
            <person name="Kamiya A."/>
            <person name="Meyers C."/>
            <person name="Nakajima M."/>
            <person name="Narusaka M."/>
            <person name="Seki M."/>
            <person name="Sakurai T."/>
            <person name="Satou M."/>
            <person name="Tamse R."/>
            <person name="Vaysberg M."/>
            <person name="Wallender E.K."/>
            <person name="Wong C."/>
            <person name="Yamamura Y."/>
            <person name="Yuan S."/>
            <person name="Shinozaki K."/>
            <person name="Davis R.W."/>
            <person name="Theologis A."/>
            <person name="Ecker J.R."/>
        </authorList>
    </citation>
    <scope>NUCLEOTIDE SEQUENCE [LARGE SCALE MRNA]</scope>
    <source>
        <strain>cv. Columbia</strain>
    </source>
</reference>
<reference key="4">
    <citation type="journal article" date="2001" name="Plant Physiol.">
        <title>The organization of cytoplasmic ribosomal protein genes in the Arabidopsis genome.</title>
        <authorList>
            <person name="Barakat A."/>
            <person name="Szick-Miranda K."/>
            <person name="Chang I.-F."/>
            <person name="Guyot R."/>
            <person name="Blanc G."/>
            <person name="Cooke R."/>
            <person name="Delseny M."/>
            <person name="Bailey-Serres J."/>
        </authorList>
    </citation>
    <scope>GENE FAMILY ORGANIZATION</scope>
    <scope>NOMENCLATURE</scope>
</reference>
<reference key="5">
    <citation type="journal article" date="2023" name="Plant Cell">
        <title>An updated nomenclature for plant ribosomal protein genes.</title>
        <authorList>
            <person name="Scarpin M.R."/>
            <person name="Busche M."/>
            <person name="Martinez R.E."/>
            <person name="Harper L.C."/>
            <person name="Reiser L."/>
            <person name="Szakonyi D."/>
            <person name="Merchante C."/>
            <person name="Lan T."/>
            <person name="Xiong W."/>
            <person name="Mo B."/>
            <person name="Tang G."/>
            <person name="Chen X."/>
            <person name="Bailey-Serres J."/>
            <person name="Browning K.S."/>
            <person name="Brunkard J.O."/>
        </authorList>
    </citation>
    <scope>NOMENCLATURE</scope>
</reference>
<sequence>MAEEEAKGLDYIPEIVLKKRKNRDELAFIRKKQLELGNSGKKKKKVSDIKRPEDFVHEFRAKEVDMIRMKQRVKRPKSSPPPVKSDLVFIIRIQGKNDMHPKTKRILNNLQLKSVFTGVFAKATDSLFQKLLKVQPYVTYGYPNDKSVKDLIYKKGCTIIEGNPVPLTDNNIIEQALGEHKILGIEDLVNEIARVGDHFREVMRFLGPLKLNKPVADVLHRKKQVFSEGGDTGNREDKINDLISKMN</sequence>
<comment type="similarity">
    <text evidence="2">Belongs to the universal ribosomal protein uL30 family.</text>
</comment>
<protein>
    <recommendedName>
        <fullName evidence="1">Large ribosomal subunit protein uL30z</fullName>
    </recommendedName>
    <alternativeName>
        <fullName>60S ribosomal protein L7-1</fullName>
    </alternativeName>
</protein>
<organism>
    <name type="scientific">Arabidopsis thaliana</name>
    <name type="common">Mouse-ear cress</name>
    <dbReference type="NCBI Taxonomy" id="3702"/>
    <lineage>
        <taxon>Eukaryota</taxon>
        <taxon>Viridiplantae</taxon>
        <taxon>Streptophyta</taxon>
        <taxon>Embryophyta</taxon>
        <taxon>Tracheophyta</taxon>
        <taxon>Spermatophyta</taxon>
        <taxon>Magnoliopsida</taxon>
        <taxon>eudicotyledons</taxon>
        <taxon>Gunneridae</taxon>
        <taxon>Pentapetalae</taxon>
        <taxon>rosids</taxon>
        <taxon>malvids</taxon>
        <taxon>Brassicales</taxon>
        <taxon>Brassicaceae</taxon>
        <taxon>Camelineae</taxon>
        <taxon>Arabidopsis</taxon>
    </lineage>
</organism>
<keyword id="KW-1185">Reference proteome</keyword>
<keyword id="KW-0687">Ribonucleoprotein</keyword>
<keyword id="KW-0689">Ribosomal protein</keyword>
<dbReference type="EMBL" id="AC011713">
    <property type="protein sequence ID" value="AAF14663.1"/>
    <property type="molecule type" value="Genomic_DNA"/>
</dbReference>
<dbReference type="EMBL" id="CP002684">
    <property type="protein sequence ID" value="AEE36444.1"/>
    <property type="molecule type" value="Genomic_DNA"/>
</dbReference>
<dbReference type="EMBL" id="BT003066">
    <property type="protein sequence ID" value="AAO23631.1"/>
    <property type="molecule type" value="mRNA"/>
</dbReference>
<dbReference type="PIR" id="A96840">
    <property type="entry name" value="A96840"/>
</dbReference>
<dbReference type="RefSeq" id="NP_178190.1">
    <property type="nucleotide sequence ID" value="NM_106723.5"/>
</dbReference>
<dbReference type="SMR" id="Q9SAI5"/>
<dbReference type="BioGRID" id="29632">
    <property type="interactions" value="8"/>
</dbReference>
<dbReference type="FunCoup" id="Q9SAI5">
    <property type="interactions" value="742"/>
</dbReference>
<dbReference type="STRING" id="3702.Q9SAI5"/>
<dbReference type="PaxDb" id="3702-AT1G80750.1"/>
<dbReference type="ProteomicsDB" id="228105"/>
<dbReference type="EnsemblPlants" id="AT1G80750.1">
    <property type="protein sequence ID" value="AT1G80750.1"/>
    <property type="gene ID" value="AT1G80750"/>
</dbReference>
<dbReference type="GeneID" id="844414"/>
<dbReference type="Gramene" id="AT1G80750.1">
    <property type="protein sequence ID" value="AT1G80750.1"/>
    <property type="gene ID" value="AT1G80750"/>
</dbReference>
<dbReference type="KEGG" id="ath:AT1G80750"/>
<dbReference type="Araport" id="AT1G80750"/>
<dbReference type="TAIR" id="AT1G80750">
    <property type="gene designation" value="RPL7A"/>
</dbReference>
<dbReference type="eggNOG" id="KOG3184">
    <property type="taxonomic scope" value="Eukaryota"/>
</dbReference>
<dbReference type="HOGENOM" id="CLU_055156_0_1_1"/>
<dbReference type="InParanoid" id="Q9SAI5"/>
<dbReference type="OMA" id="VHFMEIS"/>
<dbReference type="PhylomeDB" id="Q9SAI5"/>
<dbReference type="CD-CODE" id="4299E36E">
    <property type="entry name" value="Nucleolus"/>
</dbReference>
<dbReference type="PRO" id="PR:Q9SAI5"/>
<dbReference type="Proteomes" id="UP000006548">
    <property type="component" value="Chromosome 1"/>
</dbReference>
<dbReference type="ExpressionAtlas" id="Q9SAI5">
    <property type="expression patterns" value="baseline and differential"/>
</dbReference>
<dbReference type="GO" id="GO:0022625">
    <property type="term" value="C:cytosolic large ribosomal subunit"/>
    <property type="evidence" value="ECO:0007005"/>
    <property type="project" value="TAIR"/>
</dbReference>
<dbReference type="GO" id="GO:0005730">
    <property type="term" value="C:nucleolus"/>
    <property type="evidence" value="ECO:0007005"/>
    <property type="project" value="TAIR"/>
</dbReference>
<dbReference type="GO" id="GO:0003723">
    <property type="term" value="F:RNA binding"/>
    <property type="evidence" value="ECO:0007669"/>
    <property type="project" value="InterPro"/>
</dbReference>
<dbReference type="GO" id="GO:0003735">
    <property type="term" value="F:structural constituent of ribosome"/>
    <property type="evidence" value="ECO:0000314"/>
    <property type="project" value="CAFA"/>
</dbReference>
<dbReference type="GO" id="GO:0000463">
    <property type="term" value="P:maturation of LSU-rRNA from tricistronic rRNA transcript (SSU-rRNA, 5.8S rRNA, LSU-rRNA)"/>
    <property type="evidence" value="ECO:0007669"/>
    <property type="project" value="InterPro"/>
</dbReference>
<dbReference type="CDD" id="cd01657">
    <property type="entry name" value="Ribosomal_L7_archeal_euk"/>
    <property type="match status" value="1"/>
</dbReference>
<dbReference type="FunFam" id="3.30.1390.20:FF:000004">
    <property type="entry name" value="60S ribosomal protein L7"/>
    <property type="match status" value="1"/>
</dbReference>
<dbReference type="Gene3D" id="3.30.1390.20">
    <property type="entry name" value="Ribosomal protein L30, ferredoxin-like fold domain"/>
    <property type="match status" value="1"/>
</dbReference>
<dbReference type="InterPro" id="IPR036919">
    <property type="entry name" value="Ribo_uL30_ferredoxin-like_sf"/>
</dbReference>
<dbReference type="InterPro" id="IPR039699">
    <property type="entry name" value="Ribosomal_uL30"/>
</dbReference>
<dbReference type="InterPro" id="IPR005998">
    <property type="entry name" value="Ribosomal_uL30_euk"/>
</dbReference>
<dbReference type="InterPro" id="IPR035808">
    <property type="entry name" value="Ribosomal_uL30_euk_arc"/>
</dbReference>
<dbReference type="InterPro" id="IPR016082">
    <property type="entry name" value="Ribosomal_uL30_ferredoxin-like"/>
</dbReference>
<dbReference type="InterPro" id="IPR012988">
    <property type="entry name" value="Ribosomal_uL30_N_euk"/>
</dbReference>
<dbReference type="NCBIfam" id="TIGR01310">
    <property type="entry name" value="uL30_euk"/>
    <property type="match status" value="1"/>
</dbReference>
<dbReference type="PANTHER" id="PTHR11524">
    <property type="entry name" value="60S RIBOSOMAL PROTEIN L7"/>
    <property type="match status" value="1"/>
</dbReference>
<dbReference type="PANTHER" id="PTHR11524:SF36">
    <property type="entry name" value="LARGE RIBOSOMAL SUBUNIT PROTEIN UL30Z"/>
    <property type="match status" value="1"/>
</dbReference>
<dbReference type="Pfam" id="PF00327">
    <property type="entry name" value="Ribosomal_L30"/>
    <property type="match status" value="1"/>
</dbReference>
<dbReference type="Pfam" id="PF08079">
    <property type="entry name" value="Ribosomal_L30_N"/>
    <property type="match status" value="1"/>
</dbReference>
<dbReference type="SUPFAM" id="SSF55129">
    <property type="entry name" value="Ribosomal protein L30p/L7e"/>
    <property type="match status" value="1"/>
</dbReference>
<feature type="chain" id="PRO_0000239924" description="Large ribosomal subunit protein uL30z">
    <location>
        <begin position="1"/>
        <end position="247"/>
    </location>
</feature>